<dbReference type="EC" id="2.7.7.6" evidence="1"/>
<dbReference type="EMBL" id="CP001184">
    <property type="protein sequence ID" value="ACI59983.1"/>
    <property type="molecule type" value="Genomic_DNA"/>
</dbReference>
<dbReference type="RefSeq" id="WP_004026159.1">
    <property type="nucleotide sequence ID" value="NC_011374.1"/>
</dbReference>
<dbReference type="SMR" id="B5ZAZ4"/>
<dbReference type="STRING" id="565575.UUR10_0179"/>
<dbReference type="GeneID" id="93848660"/>
<dbReference type="KEGG" id="uue:UUR10_0179"/>
<dbReference type="eggNOG" id="COG0086">
    <property type="taxonomic scope" value="Bacteria"/>
</dbReference>
<dbReference type="HOGENOM" id="CLU_000524_3_1_14"/>
<dbReference type="OrthoDB" id="9815296at2"/>
<dbReference type="Proteomes" id="UP000002018">
    <property type="component" value="Chromosome"/>
</dbReference>
<dbReference type="GO" id="GO:0000428">
    <property type="term" value="C:DNA-directed RNA polymerase complex"/>
    <property type="evidence" value="ECO:0007669"/>
    <property type="project" value="UniProtKB-KW"/>
</dbReference>
<dbReference type="GO" id="GO:0003677">
    <property type="term" value="F:DNA binding"/>
    <property type="evidence" value="ECO:0007669"/>
    <property type="project" value="UniProtKB-UniRule"/>
</dbReference>
<dbReference type="GO" id="GO:0003899">
    <property type="term" value="F:DNA-directed RNA polymerase activity"/>
    <property type="evidence" value="ECO:0007669"/>
    <property type="project" value="UniProtKB-UniRule"/>
</dbReference>
<dbReference type="GO" id="GO:0000287">
    <property type="term" value="F:magnesium ion binding"/>
    <property type="evidence" value="ECO:0007669"/>
    <property type="project" value="UniProtKB-UniRule"/>
</dbReference>
<dbReference type="GO" id="GO:0008270">
    <property type="term" value="F:zinc ion binding"/>
    <property type="evidence" value="ECO:0007669"/>
    <property type="project" value="UniProtKB-UniRule"/>
</dbReference>
<dbReference type="GO" id="GO:0006351">
    <property type="term" value="P:DNA-templated transcription"/>
    <property type="evidence" value="ECO:0007669"/>
    <property type="project" value="UniProtKB-UniRule"/>
</dbReference>
<dbReference type="CDD" id="cd02655">
    <property type="entry name" value="RNAP_beta'_C"/>
    <property type="match status" value="1"/>
</dbReference>
<dbReference type="CDD" id="cd01609">
    <property type="entry name" value="RNAP_beta'_N"/>
    <property type="match status" value="1"/>
</dbReference>
<dbReference type="Gene3D" id="1.10.132.30">
    <property type="match status" value="1"/>
</dbReference>
<dbReference type="Gene3D" id="1.10.150.390">
    <property type="match status" value="1"/>
</dbReference>
<dbReference type="Gene3D" id="1.10.1790.20">
    <property type="match status" value="1"/>
</dbReference>
<dbReference type="Gene3D" id="1.10.40.90">
    <property type="match status" value="1"/>
</dbReference>
<dbReference type="Gene3D" id="2.40.40.20">
    <property type="match status" value="1"/>
</dbReference>
<dbReference type="Gene3D" id="2.40.50.100">
    <property type="match status" value="1"/>
</dbReference>
<dbReference type="Gene3D" id="4.10.860.120">
    <property type="entry name" value="RNA polymerase II, clamp domain"/>
    <property type="match status" value="1"/>
</dbReference>
<dbReference type="Gene3D" id="1.10.274.100">
    <property type="entry name" value="RNA polymerase Rpb1, domain 3"/>
    <property type="match status" value="1"/>
</dbReference>
<dbReference type="HAMAP" id="MF_01322">
    <property type="entry name" value="RNApol_bact_RpoC"/>
    <property type="match status" value="1"/>
</dbReference>
<dbReference type="InterPro" id="IPR045867">
    <property type="entry name" value="DNA-dir_RpoC_beta_prime"/>
</dbReference>
<dbReference type="InterPro" id="IPR012754">
    <property type="entry name" value="DNA-dir_RpoC_beta_prime_bact"/>
</dbReference>
<dbReference type="InterPro" id="IPR000722">
    <property type="entry name" value="RNA_pol_asu"/>
</dbReference>
<dbReference type="InterPro" id="IPR006592">
    <property type="entry name" value="RNA_pol_N"/>
</dbReference>
<dbReference type="InterPro" id="IPR007080">
    <property type="entry name" value="RNA_pol_Rpb1_1"/>
</dbReference>
<dbReference type="InterPro" id="IPR007066">
    <property type="entry name" value="RNA_pol_Rpb1_3"/>
</dbReference>
<dbReference type="InterPro" id="IPR042102">
    <property type="entry name" value="RNA_pol_Rpb1_3_sf"/>
</dbReference>
<dbReference type="InterPro" id="IPR007083">
    <property type="entry name" value="RNA_pol_Rpb1_4"/>
</dbReference>
<dbReference type="InterPro" id="IPR007081">
    <property type="entry name" value="RNA_pol_Rpb1_5"/>
</dbReference>
<dbReference type="InterPro" id="IPR044893">
    <property type="entry name" value="RNA_pol_Rpb1_clamp_domain"/>
</dbReference>
<dbReference type="InterPro" id="IPR038120">
    <property type="entry name" value="Rpb1_funnel_sf"/>
</dbReference>
<dbReference type="NCBIfam" id="TIGR02386">
    <property type="entry name" value="rpoC_TIGR"/>
    <property type="match status" value="1"/>
</dbReference>
<dbReference type="PANTHER" id="PTHR19376">
    <property type="entry name" value="DNA-DIRECTED RNA POLYMERASE"/>
    <property type="match status" value="1"/>
</dbReference>
<dbReference type="PANTHER" id="PTHR19376:SF54">
    <property type="entry name" value="DNA-DIRECTED RNA POLYMERASE SUBUNIT BETA"/>
    <property type="match status" value="1"/>
</dbReference>
<dbReference type="Pfam" id="PF04997">
    <property type="entry name" value="RNA_pol_Rpb1_1"/>
    <property type="match status" value="1"/>
</dbReference>
<dbReference type="Pfam" id="PF00623">
    <property type="entry name" value="RNA_pol_Rpb1_2"/>
    <property type="match status" value="1"/>
</dbReference>
<dbReference type="Pfam" id="PF04983">
    <property type="entry name" value="RNA_pol_Rpb1_3"/>
    <property type="match status" value="1"/>
</dbReference>
<dbReference type="Pfam" id="PF05000">
    <property type="entry name" value="RNA_pol_Rpb1_4"/>
    <property type="match status" value="1"/>
</dbReference>
<dbReference type="Pfam" id="PF04998">
    <property type="entry name" value="RNA_pol_Rpb1_5"/>
    <property type="match status" value="1"/>
</dbReference>
<dbReference type="SMART" id="SM00663">
    <property type="entry name" value="RPOLA_N"/>
    <property type="match status" value="1"/>
</dbReference>
<dbReference type="SUPFAM" id="SSF64484">
    <property type="entry name" value="beta and beta-prime subunits of DNA dependent RNA-polymerase"/>
    <property type="match status" value="1"/>
</dbReference>
<keyword id="KW-0240">DNA-directed RNA polymerase</keyword>
<keyword id="KW-0460">Magnesium</keyword>
<keyword id="KW-0479">Metal-binding</keyword>
<keyword id="KW-0548">Nucleotidyltransferase</keyword>
<keyword id="KW-0804">Transcription</keyword>
<keyword id="KW-0808">Transferase</keyword>
<keyword id="KW-0862">Zinc</keyword>
<name>RPOC_UREU1</name>
<proteinExistence type="inferred from homology"/>
<evidence type="ECO:0000255" key="1">
    <source>
        <dbReference type="HAMAP-Rule" id="MF_01322"/>
    </source>
</evidence>
<gene>
    <name evidence="1" type="primary">rpoC</name>
    <name type="ordered locus">UUR10_0179</name>
</gene>
<protein>
    <recommendedName>
        <fullName evidence="1">DNA-directed RNA polymerase subunit beta'</fullName>
        <shortName evidence="1">RNAP subunit beta'</shortName>
        <ecNumber evidence="1">2.7.7.6</ecNumber>
    </recommendedName>
    <alternativeName>
        <fullName evidence="1">RNA polymerase subunit beta'</fullName>
    </alternativeName>
    <alternativeName>
        <fullName evidence="1">Transcriptase subunit beta'</fullName>
    </alternativeName>
</protein>
<accession>B5ZAZ4</accession>
<feature type="chain" id="PRO_1000141799" description="DNA-directed RNA polymerase subunit beta'">
    <location>
        <begin position="1"/>
        <end position="1305"/>
    </location>
</feature>
<feature type="binding site" evidence="1">
    <location>
        <position position="59"/>
    </location>
    <ligand>
        <name>Zn(2+)</name>
        <dbReference type="ChEBI" id="CHEBI:29105"/>
        <label>1</label>
    </ligand>
</feature>
<feature type="binding site" evidence="1">
    <location>
        <position position="61"/>
    </location>
    <ligand>
        <name>Zn(2+)</name>
        <dbReference type="ChEBI" id="CHEBI:29105"/>
        <label>1</label>
    </ligand>
</feature>
<feature type="binding site" evidence="1">
    <location>
        <position position="74"/>
    </location>
    <ligand>
        <name>Zn(2+)</name>
        <dbReference type="ChEBI" id="CHEBI:29105"/>
        <label>1</label>
    </ligand>
</feature>
<feature type="binding site" evidence="1">
    <location>
        <position position="77"/>
    </location>
    <ligand>
        <name>Zn(2+)</name>
        <dbReference type="ChEBI" id="CHEBI:29105"/>
        <label>1</label>
    </ligand>
</feature>
<feature type="binding site" evidence="1">
    <location>
        <position position="527"/>
    </location>
    <ligand>
        <name>Mg(2+)</name>
        <dbReference type="ChEBI" id="CHEBI:18420"/>
    </ligand>
</feature>
<feature type="binding site" evidence="1">
    <location>
        <position position="529"/>
    </location>
    <ligand>
        <name>Mg(2+)</name>
        <dbReference type="ChEBI" id="CHEBI:18420"/>
    </ligand>
</feature>
<feature type="binding site" evidence="1">
    <location>
        <position position="531"/>
    </location>
    <ligand>
        <name>Mg(2+)</name>
        <dbReference type="ChEBI" id="CHEBI:18420"/>
    </ligand>
</feature>
<feature type="binding site" evidence="1">
    <location>
        <position position="922"/>
    </location>
    <ligand>
        <name>Zn(2+)</name>
        <dbReference type="ChEBI" id="CHEBI:29105"/>
        <label>2</label>
    </ligand>
</feature>
<feature type="binding site" evidence="1">
    <location>
        <position position="997"/>
    </location>
    <ligand>
        <name>Zn(2+)</name>
        <dbReference type="ChEBI" id="CHEBI:29105"/>
        <label>2</label>
    </ligand>
</feature>
<feature type="binding site" evidence="1">
    <location>
        <position position="1004"/>
    </location>
    <ligand>
        <name>Zn(2+)</name>
        <dbReference type="ChEBI" id="CHEBI:29105"/>
        <label>2</label>
    </ligand>
</feature>
<feature type="binding site" evidence="1">
    <location>
        <position position="1007"/>
    </location>
    <ligand>
        <name>Zn(2+)</name>
        <dbReference type="ChEBI" id="CHEBI:29105"/>
        <label>2</label>
    </ligand>
</feature>
<organism>
    <name type="scientific">Ureaplasma urealyticum serovar 10 (strain ATCC 33699 / Western)</name>
    <dbReference type="NCBI Taxonomy" id="565575"/>
    <lineage>
        <taxon>Bacteria</taxon>
        <taxon>Bacillati</taxon>
        <taxon>Mycoplasmatota</taxon>
        <taxon>Mycoplasmoidales</taxon>
        <taxon>Mycoplasmoidaceae</taxon>
        <taxon>Ureaplasma</taxon>
    </lineage>
</organism>
<comment type="function">
    <text evidence="1">DNA-dependent RNA polymerase catalyzes the transcription of DNA into RNA using the four ribonucleoside triphosphates as substrates.</text>
</comment>
<comment type="catalytic activity">
    <reaction evidence="1">
        <text>RNA(n) + a ribonucleoside 5'-triphosphate = RNA(n+1) + diphosphate</text>
        <dbReference type="Rhea" id="RHEA:21248"/>
        <dbReference type="Rhea" id="RHEA-COMP:14527"/>
        <dbReference type="Rhea" id="RHEA-COMP:17342"/>
        <dbReference type="ChEBI" id="CHEBI:33019"/>
        <dbReference type="ChEBI" id="CHEBI:61557"/>
        <dbReference type="ChEBI" id="CHEBI:140395"/>
        <dbReference type="EC" id="2.7.7.6"/>
    </reaction>
</comment>
<comment type="cofactor">
    <cofactor evidence="1">
        <name>Mg(2+)</name>
        <dbReference type="ChEBI" id="CHEBI:18420"/>
    </cofactor>
    <text evidence="1">Binds 1 Mg(2+) ion per subunit.</text>
</comment>
<comment type="cofactor">
    <cofactor evidence="1">
        <name>Zn(2+)</name>
        <dbReference type="ChEBI" id="CHEBI:29105"/>
    </cofactor>
    <text evidence="1">Binds 2 Zn(2+) ions per subunit.</text>
</comment>
<comment type="subunit">
    <text evidence="1">The RNAP catalytic core consists of 2 alpha, 1 beta, 1 beta' and 1 omega subunit. When a sigma factor is associated with the core the holoenzyme is formed, which can initiate transcription.</text>
</comment>
<comment type="similarity">
    <text evidence="1">Belongs to the RNA polymerase beta' chain family.</text>
</comment>
<reference key="1">
    <citation type="submission" date="2008-10" db="EMBL/GenBank/DDBJ databases">
        <title>Genome sequence of Ureaplasma urealyticum serovar 10 ATCC-33699.</title>
        <authorList>
            <person name="Shrivastava S."/>
            <person name="Methe B.A."/>
            <person name="Glass J."/>
            <person name="White K."/>
            <person name="Duffy L.B."/>
        </authorList>
    </citation>
    <scope>NUCLEOTIDE SEQUENCE [LARGE SCALE GENOMIC DNA]</scope>
    <source>
        <strain>ATCC 33699 / Western</strain>
    </source>
</reference>
<sequence>MSQKGIKSLTISIASPEQILSWSKGEITKPETINYKSLKPEPNGLFDESIFGPSKDYECYCGKYRKVKHKGKVCERCHVEITESIVRRERMGHIELAAPVAHIWFTKELPSPSKISLLLDITYKEVDQVVYFVNYIVLDEGNNEYDGKSIFNKKEVLDLTSPKNSIRSRNKLRRTLRNIQERIEEELNHEREALIQDFDYRLAVTYDQMLKDSNIPFSVKDVMAFIEKHTGVRFGIGAEAIHELLEKLNLEEEHEKIKQAIQNSPNAYDQKTKRLLRRLECVRWIKDSGSKPEWMVMTRIPVTPSETRPIISLDGGRFTTSDTNNFYRKIIIRNERLKQMQATDAPEILLDNEKRLLQEAVDSLFDNNSRKKPVVGKDKRPLKSLSNHLKGKQGLFRQNLLGKRVDYSGRSVIVVGPELKMYEVGIPALMILKLFRPYIISELIRKRDEFGNEIQPICANIKLAEQKILAQDDEIWPVVEKVIKQRPVILNRAPTLHRLGIQAFEPKMVDGKAIRLHPLVTTAFNADFDGDQMAVHIPLSKEAVAEARSILLASWHILGPKDGKPIITPTQDMILGIYYLTKEKFPQPIEEMILKDPVQARIEFINHFHIFATQDEAIRAYKLKTIRINDVIGITTKAFDNKSFSKEGILVTTVGKIIFNQAFPTNFPYINDVKNLYGDNQFEIIGMHESILDYLKAYNLKEPLTKKTLSTVIDYLYKVSEIEVVPQTMDKIKALGFKYSMISATSISAFDIPSYDQKYEYFKETDELVAKLREFYLDGKLTDDERYTKVVQAWSQTKDKVTHDIEKLINSDEYKDNPIVIMAKSGARGNTSNFTQLAGMRGLMSKSYNYDQKNNSGVIKDTIEIPIKHSFIEGLSVSEYFNSSFGARKGMTDTAMKTAKSGYMTRKLVDSTQAVVIKGNDCGTKEGIIVREIRNTKDNTSIESLKDRIVGRFSINPIYDTKNKLIIEGDKLITNEIANMIQNSGIREVEVRSPLHCSSLYGVCQKCFGLDLSTNKLIETGTAIGVIAAQSIGEPGTQLTMRTFHTGGVAGDTNITQGFERIKQLFDCIQPQENEKAIISQVKGTVDRIEKDSNTNGYNVVIKYNKDNFVSYPTRPNAVLRIKTGDNVVAGQKITEGSIDVNDLLKYAGIENVRHYIIKEVQKVYRMQGIEISDKYIEVIISQLTNKVTITNPGDSGLFVGETISINEFTEVAQSMLVNKKKPPSAINQVFGLDHAPSKSGSFLSAASFQDTKKILTDAAARSQKDMLIGLKENVILGNLIPAGTGLKDVEEVIAYGEEMYKKQY</sequence>